<reference key="1">
    <citation type="journal article" date="2004" name="Genome Res.">
        <title>The status, quality, and expansion of the NIH full-length cDNA project: the Mammalian Gene Collection (MGC).</title>
        <authorList>
            <consortium name="The MGC Project Team"/>
        </authorList>
    </citation>
    <scope>NUCLEOTIDE SEQUENCE [LARGE SCALE MRNA]</scope>
    <source>
        <tissue>Kidney</tissue>
    </source>
</reference>
<keyword id="KW-1015">Disulfide bond</keyword>
<keyword id="KW-0325">Glycoprotein</keyword>
<keyword id="KW-0378">Hydrolase</keyword>
<keyword id="KW-0645">Protease</keyword>
<keyword id="KW-1185">Reference proteome</keyword>
<keyword id="KW-0964">Secreted</keyword>
<keyword id="KW-0720">Serine protease</keyword>
<keyword id="KW-0732">Signal</keyword>
<gene>
    <name type="primary">Prss23</name>
</gene>
<organism>
    <name type="scientific">Rattus norvegicus</name>
    <name type="common">Rat</name>
    <dbReference type="NCBI Taxonomy" id="10116"/>
    <lineage>
        <taxon>Eukaryota</taxon>
        <taxon>Metazoa</taxon>
        <taxon>Chordata</taxon>
        <taxon>Craniata</taxon>
        <taxon>Vertebrata</taxon>
        <taxon>Euteleostomi</taxon>
        <taxon>Mammalia</taxon>
        <taxon>Eutheria</taxon>
        <taxon>Euarchontoglires</taxon>
        <taxon>Glires</taxon>
        <taxon>Rodentia</taxon>
        <taxon>Myomorpha</taxon>
        <taxon>Muroidea</taxon>
        <taxon>Muridae</taxon>
        <taxon>Murinae</taxon>
        <taxon>Rattus</taxon>
    </lineage>
</organism>
<sequence length="383" mass="43160">MAGIPGLLILLLVLLCVFMQVSPYNVPWKPTWPAYRLPIVLPQSTLKLAKPDFDAKAKLEVSSSCGPQCHKGTPLPTYEEAKQYLSYETLYANGSRTETQVGIYILSNGEGRARSRDSEAAGKSRRKRQIYGYDGRFSIFGKDFLLNYPFSTSVKLSTGCTGTLVAEKHVLTAAHCIHDGKTYVKGTQKLRVGFLKPKYKDGAGGDNSSSSALVEKMKFQWIRVKRTHVPKGWIKGNANDIGMDYDYALLELKKPHKRKFMKIGVSPPAKQLPGGRIHFSGYDNDRPGNLVYRFCDVKDETYDLLYQQCDAQPGASGSGVYVRMWKRPQQKWERKIIGIFSGHQWVDMNGSPQDFNVAVRITPLKYAQICYWIKGNYLDCREG</sequence>
<name>PRS23_RAT</name>
<evidence type="ECO:0000250" key="1"/>
<evidence type="ECO:0000255" key="2"/>
<evidence type="ECO:0000255" key="3">
    <source>
        <dbReference type="PROSITE-ProRule" id="PRU10078"/>
    </source>
</evidence>
<evidence type="ECO:0000305" key="4"/>
<dbReference type="EC" id="3.4.21.-"/>
<dbReference type="EMBL" id="BC079179">
    <property type="protein sequence ID" value="AAH79179.1"/>
    <property type="molecule type" value="mRNA"/>
</dbReference>
<dbReference type="RefSeq" id="NP_001007692.1">
    <property type="nucleotide sequence ID" value="NM_001007691.1"/>
</dbReference>
<dbReference type="RefSeq" id="XP_038969020.1">
    <property type="nucleotide sequence ID" value="XM_039113092.2"/>
</dbReference>
<dbReference type="FunCoup" id="Q6AY61">
    <property type="interactions" value="773"/>
</dbReference>
<dbReference type="STRING" id="10116.ENSRNOP00000068962"/>
<dbReference type="GlyCosmos" id="Q6AY61">
    <property type="glycosylation" value="2 sites, No reported glycans"/>
</dbReference>
<dbReference type="GlyGen" id="Q6AY61">
    <property type="glycosylation" value="2 sites"/>
</dbReference>
<dbReference type="iPTMnet" id="Q6AY61"/>
<dbReference type="PhosphoSitePlus" id="Q6AY61"/>
<dbReference type="PaxDb" id="10116-ENSRNOP00000023239"/>
<dbReference type="Ensembl" id="ENSRNOT00000095166.1">
    <property type="protein sequence ID" value="ENSRNOP00000084133.1"/>
    <property type="gene ID" value="ENSRNOG00000017307.6"/>
</dbReference>
<dbReference type="GeneID" id="308807"/>
<dbReference type="KEGG" id="rno:308807"/>
<dbReference type="UCSC" id="RGD:1359545">
    <property type="organism name" value="rat"/>
</dbReference>
<dbReference type="AGR" id="RGD:1359545"/>
<dbReference type="CTD" id="11098"/>
<dbReference type="RGD" id="1359545">
    <property type="gene designation" value="Prss23"/>
</dbReference>
<dbReference type="eggNOG" id="ENOG502QTW6">
    <property type="taxonomic scope" value="Eukaryota"/>
</dbReference>
<dbReference type="GeneTree" id="ENSGT00390000000155"/>
<dbReference type="HOGENOM" id="CLU_055829_0_0_1"/>
<dbReference type="InParanoid" id="Q6AY61"/>
<dbReference type="PhylomeDB" id="Q6AY61"/>
<dbReference type="TreeFam" id="TF329011"/>
<dbReference type="Reactome" id="R-RNO-381426">
    <property type="pathway name" value="Regulation of Insulin-like Growth Factor (IGF) transport and uptake by Insulin-like Growth Factor Binding Proteins (IGFBPs)"/>
</dbReference>
<dbReference type="Reactome" id="R-RNO-8957275">
    <property type="pathway name" value="Post-translational protein phosphorylation"/>
</dbReference>
<dbReference type="PRO" id="PR:Q6AY61"/>
<dbReference type="Proteomes" id="UP000002494">
    <property type="component" value="Chromosome 1"/>
</dbReference>
<dbReference type="Bgee" id="ENSRNOG00000017307">
    <property type="expression patterns" value="Expressed in stomach and 20 other cell types or tissues"/>
</dbReference>
<dbReference type="ExpressionAtlas" id="Q6AY61">
    <property type="expression patterns" value="baseline and differential"/>
</dbReference>
<dbReference type="GO" id="GO:0005576">
    <property type="term" value="C:extracellular region"/>
    <property type="evidence" value="ECO:0007669"/>
    <property type="project" value="UniProtKB-SubCell"/>
</dbReference>
<dbReference type="GO" id="GO:0004252">
    <property type="term" value="F:serine-type endopeptidase activity"/>
    <property type="evidence" value="ECO:0007669"/>
    <property type="project" value="InterPro"/>
</dbReference>
<dbReference type="GO" id="GO:0006508">
    <property type="term" value="P:proteolysis"/>
    <property type="evidence" value="ECO:0007669"/>
    <property type="project" value="UniProtKB-KW"/>
</dbReference>
<dbReference type="FunFam" id="2.40.10.10:FF:000040">
    <property type="entry name" value="Serine protease 23"/>
    <property type="match status" value="1"/>
</dbReference>
<dbReference type="FunFam" id="2.40.10.10:FF:000048">
    <property type="entry name" value="serine protease 23"/>
    <property type="match status" value="1"/>
</dbReference>
<dbReference type="Gene3D" id="2.40.10.10">
    <property type="entry name" value="Trypsin-like serine proteases"/>
    <property type="match status" value="2"/>
</dbReference>
<dbReference type="InterPro" id="IPR050966">
    <property type="entry name" value="Glutamyl_endopeptidase"/>
</dbReference>
<dbReference type="InterPro" id="IPR009003">
    <property type="entry name" value="Peptidase_S1_PA"/>
</dbReference>
<dbReference type="InterPro" id="IPR043504">
    <property type="entry name" value="Peptidase_S1_PA_chymotrypsin"/>
</dbReference>
<dbReference type="InterPro" id="IPR001254">
    <property type="entry name" value="Trypsin_dom"/>
</dbReference>
<dbReference type="InterPro" id="IPR018114">
    <property type="entry name" value="TRYPSIN_HIS"/>
</dbReference>
<dbReference type="PANTHER" id="PTHR15462">
    <property type="entry name" value="SERINE PROTEASE"/>
    <property type="match status" value="1"/>
</dbReference>
<dbReference type="PANTHER" id="PTHR15462:SF10">
    <property type="entry name" value="SERINE PROTEASE 23"/>
    <property type="match status" value="1"/>
</dbReference>
<dbReference type="Pfam" id="PF00089">
    <property type="entry name" value="Trypsin"/>
    <property type="match status" value="1"/>
</dbReference>
<dbReference type="SUPFAM" id="SSF50494">
    <property type="entry name" value="Trypsin-like serine proteases"/>
    <property type="match status" value="1"/>
</dbReference>
<dbReference type="PROSITE" id="PS00134">
    <property type="entry name" value="TRYPSIN_HIS"/>
    <property type="match status" value="1"/>
</dbReference>
<accession>Q6AY61</accession>
<proteinExistence type="evidence at transcript level"/>
<protein>
    <recommendedName>
        <fullName>Serine protease 23</fullName>
        <ecNumber>3.4.21.-</ecNumber>
    </recommendedName>
</protein>
<comment type="subcellular location">
    <subcellularLocation>
        <location evidence="4">Secreted</location>
    </subcellularLocation>
</comment>
<comment type="similarity">
    <text evidence="4">Belongs to the peptidase S1 family.</text>
</comment>
<feature type="signal peptide" evidence="2">
    <location>
        <begin position="1"/>
        <end position="23"/>
    </location>
</feature>
<feature type="chain" id="PRO_0000299363" description="Serine protease 23">
    <location>
        <begin position="24"/>
        <end position="383"/>
    </location>
</feature>
<feature type="active site" description="Charge relay system" evidence="3">
    <location>
        <position position="175"/>
    </location>
</feature>
<feature type="active site" description="Charge relay system" evidence="3">
    <location>
        <position position="240"/>
    </location>
</feature>
<feature type="active site" description="Charge relay system" evidence="3">
    <location>
        <position position="316"/>
    </location>
</feature>
<feature type="glycosylation site" description="N-linked (GlcNAc...) asparagine" evidence="2">
    <location>
        <position position="93"/>
    </location>
</feature>
<feature type="glycosylation site" description="N-linked (GlcNAc...) asparagine" evidence="2">
    <location>
        <position position="207"/>
    </location>
</feature>
<feature type="disulfide bond" evidence="1">
    <location>
        <begin position="160"/>
        <end position="176"/>
    </location>
</feature>